<proteinExistence type="inferred from homology"/>
<sequence length="260" mass="29041">MTKVLVEPDPEEVKQLSEALGRQPVILAGICEAEYRGRAESVAGPALRIAMCKPDGTFILHNAMEKREPTNWNPAPSRQSIEVRDGCVVLRSRRLDVPEEVVVYFHKVLLACSLPKEGAKSEDSVFSLFRSEEDMKRVIREDPSVIEPGFRPVGEEVECGAGVADVVGYDEEGRFVVLELKRTRAGVSAASQLRRYVEAFREERGEEVRGILVAPSVTDRCRRLLEKYGLEWKKLEPVPLRDDGGKKQCTLTEFLAGEGD</sequence>
<comment type="function">
    <text evidence="1">Cleaves both 3' and 5' ssDNA extremities of branched DNA structures.</text>
</comment>
<comment type="subcellular location">
    <subcellularLocation>
        <location evidence="1">Cytoplasm</location>
    </subcellularLocation>
</comment>
<comment type="similarity">
    <text evidence="1">Belongs to the NucS endonuclease family.</text>
</comment>
<reference key="1">
    <citation type="journal article" date="2002" name="Proc. Natl. Acad. Sci. U.S.A.">
        <title>The complete genome of hyperthermophile Methanopyrus kandleri AV19 and monophyly of archaeal methanogens.</title>
        <authorList>
            <person name="Slesarev A.I."/>
            <person name="Mezhevaya K.V."/>
            <person name="Makarova K.S."/>
            <person name="Polushin N.N."/>
            <person name="Shcherbinina O.V."/>
            <person name="Shakhova V.V."/>
            <person name="Belova G.I."/>
            <person name="Aravind L."/>
            <person name="Natale D.A."/>
            <person name="Rogozin I.B."/>
            <person name="Tatusov R.L."/>
            <person name="Wolf Y.I."/>
            <person name="Stetter K.O."/>
            <person name="Malykh A.G."/>
            <person name="Koonin E.V."/>
            <person name="Kozyavkin S.A."/>
        </authorList>
    </citation>
    <scope>NUCLEOTIDE SEQUENCE [LARGE SCALE GENOMIC DNA]</scope>
    <source>
        <strain>AV19 / DSM 6324 / JCM 9639 / NBRC 100938</strain>
    </source>
</reference>
<organism>
    <name type="scientific">Methanopyrus kandleri (strain AV19 / DSM 6324 / JCM 9639 / NBRC 100938)</name>
    <dbReference type="NCBI Taxonomy" id="190192"/>
    <lineage>
        <taxon>Archaea</taxon>
        <taxon>Methanobacteriati</taxon>
        <taxon>Methanobacteriota</taxon>
        <taxon>Methanomada group</taxon>
        <taxon>Methanopyri</taxon>
        <taxon>Methanopyrales</taxon>
        <taxon>Methanopyraceae</taxon>
        <taxon>Methanopyrus</taxon>
    </lineage>
</organism>
<feature type="chain" id="PRO_0000155692" description="Endonuclease NucS">
    <location>
        <begin position="1"/>
        <end position="260"/>
    </location>
</feature>
<dbReference type="EC" id="3.1.-.-" evidence="1"/>
<dbReference type="EMBL" id="AE009439">
    <property type="protein sequence ID" value="AAM01722.1"/>
    <property type="molecule type" value="Genomic_DNA"/>
</dbReference>
<dbReference type="RefSeq" id="WP_011018877.1">
    <property type="nucleotide sequence ID" value="NC_003551.1"/>
</dbReference>
<dbReference type="SMR" id="Q8TY00"/>
<dbReference type="STRING" id="190192.MK0507"/>
<dbReference type="PaxDb" id="190192-MK0507"/>
<dbReference type="EnsemblBacteria" id="AAM01722">
    <property type="protein sequence ID" value="AAM01722"/>
    <property type="gene ID" value="MK0507"/>
</dbReference>
<dbReference type="GeneID" id="1476608"/>
<dbReference type="KEGG" id="mka:MK0507"/>
<dbReference type="PATRIC" id="fig|190192.8.peg.538"/>
<dbReference type="HOGENOM" id="CLU_069350_1_0_2"/>
<dbReference type="InParanoid" id="Q8TY00"/>
<dbReference type="OrthoDB" id="15177at2157"/>
<dbReference type="Proteomes" id="UP000001826">
    <property type="component" value="Chromosome"/>
</dbReference>
<dbReference type="GO" id="GO:0005737">
    <property type="term" value="C:cytoplasm"/>
    <property type="evidence" value="ECO:0007669"/>
    <property type="project" value="UniProtKB-SubCell"/>
</dbReference>
<dbReference type="GO" id="GO:0003677">
    <property type="term" value="F:DNA binding"/>
    <property type="evidence" value="ECO:0007669"/>
    <property type="project" value="UniProtKB-KW"/>
</dbReference>
<dbReference type="GO" id="GO:0000014">
    <property type="term" value="F:single-stranded DNA endodeoxyribonuclease activity"/>
    <property type="evidence" value="ECO:0007669"/>
    <property type="project" value="UniProtKB-UniRule"/>
</dbReference>
<dbReference type="CDD" id="cd22341">
    <property type="entry name" value="NucS-like"/>
    <property type="match status" value="1"/>
</dbReference>
<dbReference type="Gene3D" id="2.70.180.20">
    <property type="match status" value="1"/>
</dbReference>
<dbReference type="Gene3D" id="3.40.1350.10">
    <property type="match status" value="1"/>
</dbReference>
<dbReference type="HAMAP" id="MF_00722">
    <property type="entry name" value="NucS"/>
    <property type="match status" value="1"/>
</dbReference>
<dbReference type="InterPro" id="IPR002793">
    <property type="entry name" value="Endonuclease_NucS"/>
</dbReference>
<dbReference type="InterPro" id="IPR048301">
    <property type="entry name" value="NucS_C"/>
</dbReference>
<dbReference type="InterPro" id="IPR048302">
    <property type="entry name" value="NucS_N"/>
</dbReference>
<dbReference type="InterPro" id="IPR049173">
    <property type="entry name" value="NucS_N_sf"/>
</dbReference>
<dbReference type="InterPro" id="IPR011856">
    <property type="entry name" value="tRNA_endonuc-like_dom_sf"/>
</dbReference>
<dbReference type="NCBIfam" id="NF003270">
    <property type="entry name" value="PRK04247.1"/>
    <property type="match status" value="1"/>
</dbReference>
<dbReference type="PANTHER" id="PTHR38814">
    <property type="entry name" value="ENDONUCLEASE NUCS"/>
    <property type="match status" value="1"/>
</dbReference>
<dbReference type="PANTHER" id="PTHR38814:SF1">
    <property type="entry name" value="ENDONUCLEASE NUCS"/>
    <property type="match status" value="1"/>
</dbReference>
<dbReference type="Pfam" id="PF01939">
    <property type="entry name" value="NucS_C"/>
    <property type="match status" value="1"/>
</dbReference>
<dbReference type="Pfam" id="PF21003">
    <property type="entry name" value="NucS_N"/>
    <property type="match status" value="1"/>
</dbReference>
<accession>Q8TY00</accession>
<keyword id="KW-0963">Cytoplasm</keyword>
<keyword id="KW-0238">DNA-binding</keyword>
<keyword id="KW-0255">Endonuclease</keyword>
<keyword id="KW-0378">Hydrolase</keyword>
<keyword id="KW-0540">Nuclease</keyword>
<keyword id="KW-1185">Reference proteome</keyword>
<gene>
    <name evidence="1" type="primary">nucS</name>
    <name type="ordered locus">MK0507</name>
</gene>
<protein>
    <recommendedName>
        <fullName evidence="1">Endonuclease NucS</fullName>
        <ecNumber evidence="1">3.1.-.-</ecNumber>
    </recommendedName>
</protein>
<evidence type="ECO:0000255" key="1">
    <source>
        <dbReference type="HAMAP-Rule" id="MF_00722"/>
    </source>
</evidence>
<name>NUCS_METKA</name>